<organism>
    <name type="scientific">Vibrio cholerae serotype O1 (strain ATCC 39541 / Classical Ogawa 395 / O395)</name>
    <dbReference type="NCBI Taxonomy" id="345073"/>
    <lineage>
        <taxon>Bacteria</taxon>
        <taxon>Pseudomonadati</taxon>
        <taxon>Pseudomonadota</taxon>
        <taxon>Gammaproteobacteria</taxon>
        <taxon>Vibrionales</taxon>
        <taxon>Vibrionaceae</taxon>
        <taxon>Vibrio</taxon>
    </lineage>
</organism>
<protein>
    <recommendedName>
        <fullName evidence="1">UDP-N-acetylglucosamine--N-acetylmuramyl-(pentapeptide) pyrophosphoryl-undecaprenol N-acetylglucosamine transferase</fullName>
        <ecNumber evidence="1">2.4.1.227</ecNumber>
    </recommendedName>
    <alternativeName>
        <fullName evidence="1">Undecaprenyl-PP-MurNAc-pentapeptide-UDPGlcNAc GlcNAc transferase</fullName>
    </alternativeName>
</protein>
<reference key="1">
    <citation type="submission" date="2007-03" db="EMBL/GenBank/DDBJ databases">
        <authorList>
            <person name="Heidelberg J."/>
        </authorList>
    </citation>
    <scope>NUCLEOTIDE SEQUENCE [LARGE SCALE GENOMIC DNA]</scope>
    <source>
        <strain>ATCC 39541 / Classical Ogawa 395 / O395</strain>
    </source>
</reference>
<reference key="2">
    <citation type="journal article" date="2008" name="PLoS ONE">
        <title>A recalibrated molecular clock and independent origins for the cholera pandemic clones.</title>
        <authorList>
            <person name="Feng L."/>
            <person name="Reeves P.R."/>
            <person name="Lan R."/>
            <person name="Ren Y."/>
            <person name="Gao C."/>
            <person name="Zhou Z."/>
            <person name="Ren Y."/>
            <person name="Cheng J."/>
            <person name="Wang W."/>
            <person name="Wang J."/>
            <person name="Qian W."/>
            <person name="Li D."/>
            <person name="Wang L."/>
        </authorList>
    </citation>
    <scope>NUCLEOTIDE SEQUENCE [LARGE SCALE GENOMIC DNA]</scope>
    <source>
        <strain>ATCC 39541 / Classical Ogawa 395 / O395</strain>
    </source>
</reference>
<comment type="function">
    <text evidence="1">Cell wall formation. Catalyzes the transfer of a GlcNAc subunit on undecaprenyl-pyrophosphoryl-MurNAc-pentapeptide (lipid intermediate I) to form undecaprenyl-pyrophosphoryl-MurNAc-(pentapeptide)GlcNAc (lipid intermediate II).</text>
</comment>
<comment type="catalytic activity">
    <reaction evidence="1">
        <text>di-trans,octa-cis-undecaprenyl diphospho-N-acetyl-alpha-D-muramoyl-L-alanyl-D-glutamyl-meso-2,6-diaminopimeloyl-D-alanyl-D-alanine + UDP-N-acetyl-alpha-D-glucosamine = di-trans,octa-cis-undecaprenyl diphospho-[N-acetyl-alpha-D-glucosaminyl-(1-&gt;4)]-N-acetyl-alpha-D-muramoyl-L-alanyl-D-glutamyl-meso-2,6-diaminopimeloyl-D-alanyl-D-alanine + UDP + H(+)</text>
        <dbReference type="Rhea" id="RHEA:31227"/>
        <dbReference type="ChEBI" id="CHEBI:15378"/>
        <dbReference type="ChEBI" id="CHEBI:57705"/>
        <dbReference type="ChEBI" id="CHEBI:58223"/>
        <dbReference type="ChEBI" id="CHEBI:61387"/>
        <dbReference type="ChEBI" id="CHEBI:61388"/>
        <dbReference type="EC" id="2.4.1.227"/>
    </reaction>
</comment>
<comment type="pathway">
    <text evidence="1">Cell wall biogenesis; peptidoglycan biosynthesis.</text>
</comment>
<comment type="subcellular location">
    <subcellularLocation>
        <location evidence="1">Cell inner membrane</location>
        <topology evidence="1">Peripheral membrane protein</topology>
        <orientation evidence="1">Cytoplasmic side</orientation>
    </subcellularLocation>
</comment>
<comment type="similarity">
    <text evidence="1">Belongs to the glycosyltransferase 28 family. MurG subfamily.</text>
</comment>
<dbReference type="EC" id="2.4.1.227" evidence="1"/>
<dbReference type="EMBL" id="CP000627">
    <property type="protein sequence ID" value="ABQ21490.1"/>
    <property type="molecule type" value="Genomic_DNA"/>
</dbReference>
<dbReference type="EMBL" id="CP001235">
    <property type="protein sequence ID" value="ACP10505.1"/>
    <property type="molecule type" value="Genomic_DNA"/>
</dbReference>
<dbReference type="SMR" id="A5F5M9"/>
<dbReference type="CAZy" id="GT28">
    <property type="family name" value="Glycosyltransferase Family 28"/>
</dbReference>
<dbReference type="KEGG" id="vco:VC0395_A1979"/>
<dbReference type="KEGG" id="vcr:VC395_2516"/>
<dbReference type="PATRIC" id="fig|345073.21.peg.2420"/>
<dbReference type="eggNOG" id="COG0707">
    <property type="taxonomic scope" value="Bacteria"/>
</dbReference>
<dbReference type="HOGENOM" id="CLU_037404_2_0_6"/>
<dbReference type="UniPathway" id="UPA00219"/>
<dbReference type="Proteomes" id="UP000000249">
    <property type="component" value="Chromosome 2"/>
</dbReference>
<dbReference type="GO" id="GO:0005886">
    <property type="term" value="C:plasma membrane"/>
    <property type="evidence" value="ECO:0007669"/>
    <property type="project" value="UniProtKB-SubCell"/>
</dbReference>
<dbReference type="GO" id="GO:0051991">
    <property type="term" value="F:UDP-N-acetyl-D-glucosamine:N-acetylmuramoyl-L-alanyl-D-glutamyl-meso-2,6-diaminopimelyl-D-alanyl-D-alanine-diphosphoundecaprenol 4-beta-N-acetylglucosaminlytransferase activity"/>
    <property type="evidence" value="ECO:0007669"/>
    <property type="project" value="RHEA"/>
</dbReference>
<dbReference type="GO" id="GO:0050511">
    <property type="term" value="F:undecaprenyldiphospho-muramoylpentapeptide beta-N-acetylglucosaminyltransferase activity"/>
    <property type="evidence" value="ECO:0007669"/>
    <property type="project" value="UniProtKB-UniRule"/>
</dbReference>
<dbReference type="GO" id="GO:0005975">
    <property type="term" value="P:carbohydrate metabolic process"/>
    <property type="evidence" value="ECO:0007669"/>
    <property type="project" value="InterPro"/>
</dbReference>
<dbReference type="GO" id="GO:0051301">
    <property type="term" value="P:cell division"/>
    <property type="evidence" value="ECO:0007669"/>
    <property type="project" value="UniProtKB-KW"/>
</dbReference>
<dbReference type="GO" id="GO:0071555">
    <property type="term" value="P:cell wall organization"/>
    <property type="evidence" value="ECO:0007669"/>
    <property type="project" value="UniProtKB-KW"/>
</dbReference>
<dbReference type="GO" id="GO:0030259">
    <property type="term" value="P:lipid glycosylation"/>
    <property type="evidence" value="ECO:0007669"/>
    <property type="project" value="UniProtKB-UniRule"/>
</dbReference>
<dbReference type="GO" id="GO:0009252">
    <property type="term" value="P:peptidoglycan biosynthetic process"/>
    <property type="evidence" value="ECO:0007669"/>
    <property type="project" value="UniProtKB-UniRule"/>
</dbReference>
<dbReference type="GO" id="GO:0008360">
    <property type="term" value="P:regulation of cell shape"/>
    <property type="evidence" value="ECO:0007669"/>
    <property type="project" value="UniProtKB-KW"/>
</dbReference>
<dbReference type="CDD" id="cd03785">
    <property type="entry name" value="GT28_MurG"/>
    <property type="match status" value="1"/>
</dbReference>
<dbReference type="Gene3D" id="3.40.50.2000">
    <property type="entry name" value="Glycogen Phosphorylase B"/>
    <property type="match status" value="2"/>
</dbReference>
<dbReference type="HAMAP" id="MF_00033">
    <property type="entry name" value="MurG"/>
    <property type="match status" value="1"/>
</dbReference>
<dbReference type="InterPro" id="IPR006009">
    <property type="entry name" value="GlcNAc_MurG"/>
</dbReference>
<dbReference type="InterPro" id="IPR007235">
    <property type="entry name" value="Glyco_trans_28_C"/>
</dbReference>
<dbReference type="InterPro" id="IPR004276">
    <property type="entry name" value="GlycoTrans_28_N"/>
</dbReference>
<dbReference type="NCBIfam" id="TIGR01133">
    <property type="entry name" value="murG"/>
    <property type="match status" value="1"/>
</dbReference>
<dbReference type="PANTHER" id="PTHR21015:SF22">
    <property type="entry name" value="GLYCOSYLTRANSFERASE"/>
    <property type="match status" value="1"/>
</dbReference>
<dbReference type="PANTHER" id="PTHR21015">
    <property type="entry name" value="UDP-N-ACETYLGLUCOSAMINE--N-ACETYLMURAMYL-(PENTAPEPTIDE) PYROPHOSPHORYL-UNDECAPRENOL N-ACETYLGLUCOSAMINE TRANSFERASE 1"/>
    <property type="match status" value="1"/>
</dbReference>
<dbReference type="Pfam" id="PF04101">
    <property type="entry name" value="Glyco_tran_28_C"/>
    <property type="match status" value="1"/>
</dbReference>
<dbReference type="Pfam" id="PF03033">
    <property type="entry name" value="Glyco_transf_28"/>
    <property type="match status" value="1"/>
</dbReference>
<dbReference type="SUPFAM" id="SSF53756">
    <property type="entry name" value="UDP-Glycosyltransferase/glycogen phosphorylase"/>
    <property type="match status" value="1"/>
</dbReference>
<evidence type="ECO:0000255" key="1">
    <source>
        <dbReference type="HAMAP-Rule" id="MF_00033"/>
    </source>
</evidence>
<feature type="chain" id="PRO_1000090485" description="UDP-N-acetylglucosamine--N-acetylmuramyl-(pentapeptide) pyrophosphoryl-undecaprenol N-acetylglucosamine transferase">
    <location>
        <begin position="1"/>
        <end position="354"/>
    </location>
</feature>
<feature type="binding site" evidence="1">
    <location>
        <begin position="15"/>
        <end position="17"/>
    </location>
    <ligand>
        <name>UDP-N-acetyl-alpha-D-glucosamine</name>
        <dbReference type="ChEBI" id="CHEBI:57705"/>
    </ligand>
</feature>
<feature type="binding site" evidence="1">
    <location>
        <position position="127"/>
    </location>
    <ligand>
        <name>UDP-N-acetyl-alpha-D-glucosamine</name>
        <dbReference type="ChEBI" id="CHEBI:57705"/>
    </ligand>
</feature>
<feature type="binding site" evidence="1">
    <location>
        <position position="163"/>
    </location>
    <ligand>
        <name>UDP-N-acetyl-alpha-D-glucosamine</name>
        <dbReference type="ChEBI" id="CHEBI:57705"/>
    </ligand>
</feature>
<feature type="binding site" evidence="1">
    <location>
        <position position="191"/>
    </location>
    <ligand>
        <name>UDP-N-acetyl-alpha-D-glucosamine</name>
        <dbReference type="ChEBI" id="CHEBI:57705"/>
    </ligand>
</feature>
<feature type="binding site" evidence="1">
    <location>
        <position position="244"/>
    </location>
    <ligand>
        <name>UDP-N-acetyl-alpha-D-glucosamine</name>
        <dbReference type="ChEBI" id="CHEBI:57705"/>
    </ligand>
</feature>
<feature type="binding site" evidence="1">
    <location>
        <begin position="263"/>
        <end position="268"/>
    </location>
    <ligand>
        <name>UDP-N-acetyl-alpha-D-glucosamine</name>
        <dbReference type="ChEBI" id="CHEBI:57705"/>
    </ligand>
</feature>
<feature type="binding site" evidence="1">
    <location>
        <position position="288"/>
    </location>
    <ligand>
        <name>UDP-N-acetyl-alpha-D-glucosamine</name>
        <dbReference type="ChEBI" id="CHEBI:57705"/>
    </ligand>
</feature>
<proteinExistence type="inferred from homology"/>
<keyword id="KW-0131">Cell cycle</keyword>
<keyword id="KW-0132">Cell division</keyword>
<keyword id="KW-0997">Cell inner membrane</keyword>
<keyword id="KW-1003">Cell membrane</keyword>
<keyword id="KW-0133">Cell shape</keyword>
<keyword id="KW-0961">Cell wall biogenesis/degradation</keyword>
<keyword id="KW-0328">Glycosyltransferase</keyword>
<keyword id="KW-0472">Membrane</keyword>
<keyword id="KW-0573">Peptidoglycan synthesis</keyword>
<keyword id="KW-0808">Transferase</keyword>
<name>MURG_VIBC3</name>
<accession>A5F5M9</accession>
<accession>C3M4C3</accession>
<gene>
    <name evidence="1" type="primary">murG</name>
    <name type="ordered locus">VC0395_A1979</name>
    <name type="ordered locus">VC395_2516</name>
</gene>
<sequence>MMNKNKKLMVMAGGTGGHVFPGLAVAKQLQQQGWQIRWLGTADRMEAELVPKHGIEIDFIQVKGLRGQGLMRLLKAPFQIVNAILQARRHLLAYQPDAVLGMGGYVSGPGGIAAWLMGIPVVLHEQNAVAGLTNQWLAKIARRVFQAFPGAFADAPVVGNPVRQDVVQLAAPEQRFATRNGAIRILVMGGSQGARILNQTLPAVMAALGEGYEIRHQAGKNSQQDVAEAYAAAGVESAQVTEFIDDVADAYAWADLLICRSGALTVSEVSAAGVGAIFIPFMHKDRQQALNADHLVACGAAKMIEQPDLSVEKLTQMVRELDRAQLLSMAQKARQAAKLDADKVVAQAIIAITE</sequence>